<dbReference type="EC" id="1.3.98.5" evidence="1"/>
<dbReference type="EMBL" id="BX571856">
    <property type="protein sequence ID" value="CAG39613.1"/>
    <property type="molecule type" value="Genomic_DNA"/>
</dbReference>
<dbReference type="SMR" id="Q6GJ81"/>
<dbReference type="KEGG" id="sar:SAR0593"/>
<dbReference type="HOGENOM" id="CLU_063226_1_0_9"/>
<dbReference type="UniPathway" id="UPA00252"/>
<dbReference type="Proteomes" id="UP000000596">
    <property type="component" value="Chromosome"/>
</dbReference>
<dbReference type="GO" id="GO:0020037">
    <property type="term" value="F:heme binding"/>
    <property type="evidence" value="ECO:0007669"/>
    <property type="project" value="InterPro"/>
</dbReference>
<dbReference type="GO" id="GO:0046872">
    <property type="term" value="F:metal ion binding"/>
    <property type="evidence" value="ECO:0007669"/>
    <property type="project" value="UniProtKB-KW"/>
</dbReference>
<dbReference type="GO" id="GO:0016634">
    <property type="term" value="F:oxidoreductase activity, acting on the CH-CH group of donors, oxygen as acceptor"/>
    <property type="evidence" value="ECO:0007669"/>
    <property type="project" value="UniProtKB-UniRule"/>
</dbReference>
<dbReference type="GO" id="GO:0004601">
    <property type="term" value="F:peroxidase activity"/>
    <property type="evidence" value="ECO:0007669"/>
    <property type="project" value="InterPro"/>
</dbReference>
<dbReference type="GO" id="GO:0006785">
    <property type="term" value="P:heme B biosynthetic process"/>
    <property type="evidence" value="ECO:0007669"/>
    <property type="project" value="UniProtKB-UniRule"/>
</dbReference>
<dbReference type="Gene3D" id="3.30.70.1030">
    <property type="entry name" value="Apc35880, domain 1"/>
    <property type="match status" value="2"/>
</dbReference>
<dbReference type="HAMAP" id="MF_01442">
    <property type="entry name" value="Coproheme_decarbox_1"/>
    <property type="match status" value="1"/>
</dbReference>
<dbReference type="InterPro" id="IPR031332">
    <property type="entry name" value="CHDC"/>
</dbReference>
<dbReference type="InterPro" id="IPR010644">
    <property type="entry name" value="ChdC/CLD"/>
</dbReference>
<dbReference type="InterPro" id="IPR011008">
    <property type="entry name" value="Dimeric_a/b-barrel"/>
</dbReference>
<dbReference type="NCBIfam" id="NF008913">
    <property type="entry name" value="PRK12276.1"/>
    <property type="match status" value="1"/>
</dbReference>
<dbReference type="PANTHER" id="PTHR36843:SF1">
    <property type="entry name" value="COPROHEME DECARBOXYLASE"/>
    <property type="match status" value="1"/>
</dbReference>
<dbReference type="PANTHER" id="PTHR36843">
    <property type="entry name" value="HEME-DEPENDENT PEROXIDASE YWFI-RELATED"/>
    <property type="match status" value="1"/>
</dbReference>
<dbReference type="Pfam" id="PF06778">
    <property type="entry name" value="Chlor_dismutase"/>
    <property type="match status" value="1"/>
</dbReference>
<dbReference type="SUPFAM" id="SSF54909">
    <property type="entry name" value="Dimeric alpha+beta barrel"/>
    <property type="match status" value="1"/>
</dbReference>
<proteinExistence type="inferred from homology"/>
<organism>
    <name type="scientific">Staphylococcus aureus (strain MRSA252)</name>
    <dbReference type="NCBI Taxonomy" id="282458"/>
    <lineage>
        <taxon>Bacteria</taxon>
        <taxon>Bacillati</taxon>
        <taxon>Bacillota</taxon>
        <taxon>Bacilli</taxon>
        <taxon>Bacillales</taxon>
        <taxon>Staphylococcaceae</taxon>
        <taxon>Staphylococcus</taxon>
    </lineage>
</organism>
<feature type="chain" id="PRO_0000294051" description="Coproheme decarboxylase">
    <location>
        <begin position="1"/>
        <end position="250"/>
    </location>
</feature>
<feature type="active site" evidence="1">
    <location>
        <position position="145"/>
    </location>
</feature>
<feature type="binding site" evidence="1">
    <location>
        <position position="131"/>
    </location>
    <ligand>
        <name>Fe-coproporphyrin III</name>
        <dbReference type="ChEBI" id="CHEBI:68438"/>
    </ligand>
</feature>
<feature type="binding site" evidence="1">
    <location>
        <begin position="145"/>
        <end position="149"/>
    </location>
    <ligand>
        <name>Fe-coproporphyrin III</name>
        <dbReference type="ChEBI" id="CHEBI:68438"/>
    </ligand>
</feature>
<feature type="binding site" description="axial binding residue" evidence="1">
    <location>
        <position position="172"/>
    </location>
    <ligand>
        <name>Fe-coproporphyrin III</name>
        <dbReference type="ChEBI" id="CHEBI:68438"/>
    </ligand>
    <ligandPart>
        <name>Fe</name>
        <dbReference type="ChEBI" id="CHEBI:18248"/>
    </ligandPart>
</feature>
<feature type="binding site" evidence="1">
    <location>
        <position position="185"/>
    </location>
    <ligand>
        <name>Fe-coproporphyrin III</name>
        <dbReference type="ChEBI" id="CHEBI:68438"/>
    </ligand>
</feature>
<sequence>MSQAAETLDGWYSLHLFYAVDWASLRLVPKDERDALVTEFQSFLENTATVRSSKSGDQAIYNITGQKADLLLWFLRPEMKSLNHIENEFNKLRIADFLIPTYSYVSVIELSNYLAGKSDEDPYENPHIKARLYPELPHSDYICFYPMNKRRNETYNWYMLTMEERQKLMYDHGMIGRKYAGKIKQFITGSVGFDDFEWGVTLFSDDVLQFKKIVYEMRFDETTARYGEFGSFFVGHIINTNEFNQFFAIS</sequence>
<comment type="function">
    <text evidence="1">Involved in coproporphyrin-dependent heme b biosynthesis. Catalyzes the decarboxylation of Fe-coproporphyrin III (coproheme) to heme b (protoheme IX), the last step of the pathway. The reaction occurs in a stepwise manner with a three-propionate intermediate.</text>
</comment>
<comment type="catalytic activity">
    <reaction evidence="1">
        <text>Fe-coproporphyrin III + 2 H2O2 + 2 H(+) = heme b + 2 CO2 + 4 H2O</text>
        <dbReference type="Rhea" id="RHEA:56516"/>
        <dbReference type="ChEBI" id="CHEBI:15377"/>
        <dbReference type="ChEBI" id="CHEBI:15378"/>
        <dbReference type="ChEBI" id="CHEBI:16240"/>
        <dbReference type="ChEBI" id="CHEBI:16526"/>
        <dbReference type="ChEBI" id="CHEBI:60344"/>
        <dbReference type="ChEBI" id="CHEBI:68438"/>
        <dbReference type="EC" id="1.3.98.5"/>
    </reaction>
    <physiologicalReaction direction="left-to-right" evidence="1">
        <dbReference type="Rhea" id="RHEA:56517"/>
    </physiologicalReaction>
</comment>
<comment type="catalytic activity">
    <reaction evidence="1">
        <text>Fe-coproporphyrin III + H2O2 + H(+) = harderoheme III + CO2 + 2 H2O</text>
        <dbReference type="Rhea" id="RHEA:57940"/>
        <dbReference type="ChEBI" id="CHEBI:15377"/>
        <dbReference type="ChEBI" id="CHEBI:15378"/>
        <dbReference type="ChEBI" id="CHEBI:16240"/>
        <dbReference type="ChEBI" id="CHEBI:16526"/>
        <dbReference type="ChEBI" id="CHEBI:68438"/>
        <dbReference type="ChEBI" id="CHEBI:142463"/>
    </reaction>
    <physiologicalReaction direction="left-to-right" evidence="1">
        <dbReference type="Rhea" id="RHEA:57941"/>
    </physiologicalReaction>
</comment>
<comment type="catalytic activity">
    <reaction evidence="1">
        <text>harderoheme III + H2O2 + H(+) = heme b + CO2 + 2 H2O</text>
        <dbReference type="Rhea" id="RHEA:57944"/>
        <dbReference type="ChEBI" id="CHEBI:15377"/>
        <dbReference type="ChEBI" id="CHEBI:15378"/>
        <dbReference type="ChEBI" id="CHEBI:16240"/>
        <dbReference type="ChEBI" id="CHEBI:16526"/>
        <dbReference type="ChEBI" id="CHEBI:60344"/>
        <dbReference type="ChEBI" id="CHEBI:142463"/>
    </reaction>
    <physiologicalReaction direction="left-to-right" evidence="1">
        <dbReference type="Rhea" id="RHEA:57945"/>
    </physiologicalReaction>
</comment>
<comment type="cofactor">
    <cofactor evidence="1">
        <name>Fe-coproporphyrin III</name>
        <dbReference type="ChEBI" id="CHEBI:68438"/>
    </cofactor>
    <text evidence="1">Fe-coproporphyrin III acts both as a substrate and a redox cofactor.</text>
</comment>
<comment type="pathway">
    <text evidence="1">Porphyrin-containing compound metabolism; protoheme biosynthesis.</text>
</comment>
<comment type="similarity">
    <text evidence="1">Belongs to the ChdC family. Type 1 subfamily.</text>
</comment>
<name>CHDC_STAAR</name>
<keyword id="KW-0349">Heme</keyword>
<keyword id="KW-0350">Heme biosynthesis</keyword>
<keyword id="KW-0408">Iron</keyword>
<keyword id="KW-0479">Metal-binding</keyword>
<keyword id="KW-0560">Oxidoreductase</keyword>
<evidence type="ECO:0000255" key="1">
    <source>
        <dbReference type="HAMAP-Rule" id="MF_01442"/>
    </source>
</evidence>
<reference key="1">
    <citation type="journal article" date="2004" name="Proc. Natl. Acad. Sci. U.S.A.">
        <title>Complete genomes of two clinical Staphylococcus aureus strains: evidence for the rapid evolution of virulence and drug resistance.</title>
        <authorList>
            <person name="Holden M.T.G."/>
            <person name="Feil E.J."/>
            <person name="Lindsay J.A."/>
            <person name="Peacock S.J."/>
            <person name="Day N.P.J."/>
            <person name="Enright M.C."/>
            <person name="Foster T.J."/>
            <person name="Moore C.E."/>
            <person name="Hurst L."/>
            <person name="Atkin R."/>
            <person name="Barron A."/>
            <person name="Bason N."/>
            <person name="Bentley S.D."/>
            <person name="Chillingworth C."/>
            <person name="Chillingworth T."/>
            <person name="Churcher C."/>
            <person name="Clark L."/>
            <person name="Corton C."/>
            <person name="Cronin A."/>
            <person name="Doggett J."/>
            <person name="Dowd L."/>
            <person name="Feltwell T."/>
            <person name="Hance Z."/>
            <person name="Harris B."/>
            <person name="Hauser H."/>
            <person name="Holroyd S."/>
            <person name="Jagels K."/>
            <person name="James K.D."/>
            <person name="Lennard N."/>
            <person name="Line A."/>
            <person name="Mayes R."/>
            <person name="Moule S."/>
            <person name="Mungall K."/>
            <person name="Ormond D."/>
            <person name="Quail M.A."/>
            <person name="Rabbinowitsch E."/>
            <person name="Rutherford K.M."/>
            <person name="Sanders M."/>
            <person name="Sharp S."/>
            <person name="Simmonds M."/>
            <person name="Stevens K."/>
            <person name="Whitehead S."/>
            <person name="Barrell B.G."/>
            <person name="Spratt B.G."/>
            <person name="Parkhill J."/>
        </authorList>
    </citation>
    <scope>NUCLEOTIDE SEQUENCE [LARGE SCALE GENOMIC DNA]</scope>
    <source>
        <strain>MRSA252</strain>
    </source>
</reference>
<protein>
    <recommendedName>
        <fullName evidence="1">Coproheme decarboxylase</fullName>
        <ecNumber evidence="1">1.3.98.5</ecNumber>
    </recommendedName>
    <alternativeName>
        <fullName evidence="1">Coproheme III oxidative decarboxylase</fullName>
    </alternativeName>
    <alternativeName>
        <fullName evidence="1">Hydrogen peroxide-dependent heme synthase</fullName>
    </alternativeName>
</protein>
<gene>
    <name evidence="1" type="primary">chdC</name>
    <name type="ordered locus">SAR0593</name>
</gene>
<accession>Q6GJ81</accession>